<reference key="1">
    <citation type="journal article" date="1985" name="Nucleic Acids Res.">
        <title>The nucleotide sequence of the tnpA gene completes the sequence of the Pseudomonas transposon Tn501.</title>
        <authorList>
            <person name="Brown N.L."/>
            <person name="Winnie J.N."/>
            <person name="Fritzinger D.C."/>
            <person name="Pridmore R.D."/>
        </authorList>
    </citation>
    <scope>NUCLEOTIDE SEQUENCE [GENOMIC DNA]</scope>
</reference>
<reference key="2">
    <citation type="journal article" date="1983" name="Mol. Gen. Genet.">
        <title>DNA sequences of and complementation by the tnpR genes of Tn21, Tn501 and Tn1721.</title>
        <authorList>
            <person name="Diver W.P."/>
            <person name="Grinsted J."/>
            <person name="Fritzinger D.C."/>
            <person name="Brown N.L."/>
            <person name="Altenbuchner J."/>
            <person name="Rogowsky P."/>
            <person name="Schmitt R."/>
        </authorList>
    </citation>
    <scope>NUCLEOTIDE SEQUENCE [GENOMIC DNA] OF 1-14</scope>
</reference>
<sequence>MPRRLILSATERGTLLALPESQDDLIRYYTFNDSDLSLIRQRRGDANRLGFAVQLCLLRYPGYALGTDSELPEPVILWVAKQVQTDPASWTKYGERDVTRREHAQELRTYLQLAPFGLSDFRALVRELTELAQQTDKGLLLAGQALESLRQKRRILPALSVIDRACSEAIARANRRVYRALVEPLTDSHRAKLDELLKLKAGSSITWLTWLRQAPLKPNSRHMLEHIERLKTFQLVDLPEVLGRHIHQNRLLKLAREGGQMTPKDLGKFEPQRRYATLAAVVLESTATVIDELVDLHDRILVKLFSGAKHKHQQQFQKQGKAINDKVRLYSKIGQALLEAKEAGSDPYAAIEAVIPWDEFTESVSEAELLARPEGFDHLHLVGENFATLRRYTPALLEVLELRAAPAAQGVLAAVQTLREMNADNLRKVPADAPTAFIKPRWKPLVITPEGLDRRFYEICALSELKNALRSGDIWVKGSRQFRDFDDYLLPAEKFAALKREQALPLAINPNSDQYLEERLQLLDEQLATVARLAKDNELPDAILTESGLKITPLDAAVPDRAQALIDQTSQLLPRIKITELLMDVDDWTGFSRHFTHLKDGAEAKDRTLLLSAILGDAINLGLTKMAESSPGLTYAKLSWLQAWHIRDETYSAALAELVNHQYQHAFAAHWGDGTTSSSDGQRFRAGGRGESTGHVNPKYGSEPGRLFYTHISDQYAPFSTRVVNVGVRDSTYVLDGLLYHESDLRIEEHYTDTAGFTDHVFALMHLLGFRFAPRIRDLGETKLYVPQGVQTYPTLRPLIGGTLNIKHVRAHWDDILRLASSIKQGTVTASLMLRKLGSYPRQNGLAVALRELGRIERTLFILDWLQSVELRRRVHAGLNKGEARNSLARAVFFNRLGEIRDRSFEQQRYRASGLNLVTAAIVLWNTVYLERATQGLVEAGKPVDGELLQFLSPLGWEHINLTGDYVWRQSRRLEDGKFRPLRMPGKP</sequence>
<proteinExistence type="inferred from homology"/>
<comment type="function">
    <text>Required for transposition of transposon Tn501.</text>
</comment>
<comment type="similarity">
    <text evidence="1">Belongs to the transposase 7 family.</text>
</comment>
<dbReference type="EMBL" id="Z00027">
    <property type="protein sequence ID" value="CAA77328.1"/>
    <property type="molecule type" value="Genomic_DNA"/>
</dbReference>
<dbReference type="EMBL" id="X02803">
    <property type="protein sequence ID" value="CAA26573.1"/>
    <property type="molecule type" value="Genomic_DNA"/>
</dbReference>
<dbReference type="PIR" id="A24341">
    <property type="entry name" value="A24341"/>
</dbReference>
<dbReference type="RefSeq" id="WP_010921731.1">
    <property type="nucleotide sequence ID" value="NZ_WXZT01000052.1"/>
</dbReference>
<dbReference type="SMR" id="P06695"/>
<dbReference type="eggNOG" id="COG4644">
    <property type="taxonomic scope" value="Bacteria"/>
</dbReference>
<dbReference type="GO" id="GO:0003677">
    <property type="term" value="F:DNA binding"/>
    <property type="evidence" value="ECO:0007669"/>
    <property type="project" value="UniProtKB-KW"/>
</dbReference>
<dbReference type="GO" id="GO:0004803">
    <property type="term" value="F:transposase activity"/>
    <property type="evidence" value="ECO:0007669"/>
    <property type="project" value="InterPro"/>
</dbReference>
<dbReference type="GO" id="GO:0006313">
    <property type="term" value="P:DNA transposition"/>
    <property type="evidence" value="ECO:0007669"/>
    <property type="project" value="InterPro"/>
</dbReference>
<dbReference type="InterPro" id="IPR025296">
    <property type="entry name" value="DUF4158"/>
</dbReference>
<dbReference type="InterPro" id="IPR047653">
    <property type="entry name" value="Tn3-like_transpos"/>
</dbReference>
<dbReference type="InterPro" id="IPR002513">
    <property type="entry name" value="Tn3_Tnp_DDE_dom"/>
</dbReference>
<dbReference type="NCBIfam" id="NF033527">
    <property type="entry name" value="transpos_Tn3"/>
    <property type="match status" value="1"/>
</dbReference>
<dbReference type="Pfam" id="PF01526">
    <property type="entry name" value="DDE_Tnp_Tn3"/>
    <property type="match status" value="1"/>
</dbReference>
<dbReference type="Pfam" id="PF13700">
    <property type="entry name" value="DUF4158"/>
    <property type="match status" value="1"/>
</dbReference>
<accession>P06695</accession>
<organism>
    <name type="scientific">Pseudomonas aeruginosa</name>
    <dbReference type="NCBI Taxonomy" id="287"/>
    <lineage>
        <taxon>Bacteria</taxon>
        <taxon>Pseudomonadati</taxon>
        <taxon>Pseudomonadota</taxon>
        <taxon>Gammaproteobacteria</taxon>
        <taxon>Pseudomonadales</taxon>
        <taxon>Pseudomonadaceae</taxon>
        <taxon>Pseudomonas</taxon>
    </lineage>
</organism>
<name>TNP5_PSEAI</name>
<protein>
    <recommendedName>
        <fullName>Transposase for transposon Tn501</fullName>
    </recommendedName>
</protein>
<geneLocation type="plasmid">
    <name>pVS1</name>
</geneLocation>
<keyword id="KW-0233">DNA recombination</keyword>
<keyword id="KW-0238">DNA-binding</keyword>
<keyword id="KW-0614">Plasmid</keyword>
<keyword id="KW-0814">Transposable element</keyword>
<keyword id="KW-0815">Transposition</keyword>
<feature type="chain" id="PRO_0000075433" description="Transposase for transposon Tn501">
    <location>
        <begin position="1"/>
        <end position="988"/>
    </location>
</feature>
<gene>
    <name type="primary">tnpA</name>
</gene>
<evidence type="ECO:0000305" key="1"/>